<sequence length="683" mass="76405">MLFIFNFLFSPLPTPALICLLTFGTAIFLWLINRPQPVLPLIDLDNQSVGIEGGARRGAFQKNNDLILYYFSDAKTLYEVFQRGLAVSDNGPCLGYRKPNQPYKWISYKQVSDRAEYLGSCLLHKGYKPSQDQFIGIFAQNRPEWVISELACYTYSMVAVPLYDTLGAEAIIYVINRADISVVICDTPQKATMLIENVEKDLTPGLKTVILMDPFDDDLMKRGEKCGIEMLSLHDAENLGKENFKKPMPPNPEDLSVICFTSGTTGDPKGAMLTHQNIVSNMAAFLKFLEPIFQPTPEDVTISYLPLAHMFERLVQGVIFSCGGKIGFFQGDIRLLPDDMKALKPTVFPTVPRLLNRVYDKVQNEAKTPLKKFLLNLAIISKFNEVRNGIIRRNSLWDKLVFSKIQSSLGGKVRLMITGAAPISTPVLTFFRAAMGCWVFEAYGQTECTAGCSITSPGDWTAGHVGTPVSCNFVKLEDVADMNYFSVNNEGEICIKGNNVFKGYLKDPEKTQEVLDKDGWLHTGDIGRWLPNGTLKIIDRKKNIFKLAQGEYIAPEKIENVYSRSRPILQVFVHGESLRSFLIGVVVPDPESLPSFAAKIGVKGSFEELCQNQCVKKAILEDLQKVGKEGGLKSFEQVKSIFVHPEPFSIENGLLTPTLKAKRVELAKFFQTQIKSLYESIEE</sequence>
<evidence type="ECO:0000250" key="1"/>
<evidence type="ECO:0000250" key="2">
    <source>
        <dbReference type="UniProtKB" id="Q8JZR0"/>
    </source>
</evidence>
<evidence type="ECO:0000250" key="3">
    <source>
        <dbReference type="UniProtKB" id="Q9ULC5"/>
    </source>
</evidence>
<evidence type="ECO:0000255" key="4"/>
<evidence type="ECO:0000269" key="5">
    <source>
    </source>
</evidence>
<evidence type="ECO:0000269" key="6">
    <source>
    </source>
</evidence>
<evidence type="ECO:0000269" key="7">
    <source>
    </source>
</evidence>
<evidence type="ECO:0000269" key="8">
    <source>
    </source>
</evidence>
<evidence type="ECO:0000269" key="9">
    <source>
    </source>
</evidence>
<evidence type="ECO:0000303" key="10">
    <source>
    </source>
</evidence>
<evidence type="ECO:0000305" key="11"/>
<evidence type="ECO:0000305" key="12">
    <source>
    </source>
</evidence>
<evidence type="ECO:0000312" key="13">
    <source>
        <dbReference type="RGD" id="69402"/>
    </source>
</evidence>
<dbReference type="EC" id="6.2.1.3" evidence="8"/>
<dbReference type="EC" id="6.2.1.15" evidence="8"/>
<dbReference type="EMBL" id="AB012933">
    <property type="protein sequence ID" value="BAA33581.1"/>
    <property type="molecule type" value="mRNA"/>
</dbReference>
<dbReference type="PIR" id="JE0262">
    <property type="entry name" value="JE0262"/>
</dbReference>
<dbReference type="RefSeq" id="NP_446059.1">
    <property type="nucleotide sequence ID" value="NM_053607.1"/>
</dbReference>
<dbReference type="SMR" id="O88813"/>
<dbReference type="FunCoup" id="O88813">
    <property type="interactions" value="665"/>
</dbReference>
<dbReference type="IntAct" id="O88813">
    <property type="interactions" value="1"/>
</dbReference>
<dbReference type="STRING" id="10116.ENSRNOP00000022126"/>
<dbReference type="SwissLipids" id="SLP:000001685"/>
<dbReference type="GlyGen" id="O88813">
    <property type="glycosylation" value="2 sites"/>
</dbReference>
<dbReference type="iPTMnet" id="O88813"/>
<dbReference type="PhosphoSitePlus" id="O88813"/>
<dbReference type="PaxDb" id="10116-ENSRNOP00000022126"/>
<dbReference type="GeneID" id="94340"/>
<dbReference type="KEGG" id="rno:94340"/>
<dbReference type="UCSC" id="RGD:69402">
    <property type="organism name" value="rat"/>
</dbReference>
<dbReference type="AGR" id="RGD:69402"/>
<dbReference type="CTD" id="51703"/>
<dbReference type="RGD" id="69402">
    <property type="gene designation" value="Acsl5"/>
</dbReference>
<dbReference type="eggNOG" id="KOG1256">
    <property type="taxonomic scope" value="Eukaryota"/>
</dbReference>
<dbReference type="InParanoid" id="O88813"/>
<dbReference type="PhylomeDB" id="O88813"/>
<dbReference type="BRENDA" id="6.2.1.3">
    <property type="organism ID" value="5301"/>
</dbReference>
<dbReference type="Reactome" id="R-RNO-75876">
    <property type="pathway name" value="Synthesis of very long-chain fatty acyl-CoAs"/>
</dbReference>
<dbReference type="SABIO-RK" id="O88813"/>
<dbReference type="PRO" id="PR:O88813"/>
<dbReference type="Proteomes" id="UP000002494">
    <property type="component" value="Unplaced"/>
</dbReference>
<dbReference type="GO" id="GO:0005783">
    <property type="term" value="C:endoplasmic reticulum"/>
    <property type="evidence" value="ECO:0000266"/>
    <property type="project" value="RGD"/>
</dbReference>
<dbReference type="GO" id="GO:0005789">
    <property type="term" value="C:endoplasmic reticulum membrane"/>
    <property type="evidence" value="ECO:0007669"/>
    <property type="project" value="UniProtKB-SubCell"/>
</dbReference>
<dbReference type="GO" id="GO:0016020">
    <property type="term" value="C:membrane"/>
    <property type="evidence" value="ECO:0000318"/>
    <property type="project" value="GO_Central"/>
</dbReference>
<dbReference type="GO" id="GO:0005741">
    <property type="term" value="C:mitochondrial outer membrane"/>
    <property type="evidence" value="ECO:0007669"/>
    <property type="project" value="UniProtKB-SubCell"/>
</dbReference>
<dbReference type="GO" id="GO:0005739">
    <property type="term" value="C:mitochondrion"/>
    <property type="evidence" value="ECO:0000266"/>
    <property type="project" value="RGD"/>
</dbReference>
<dbReference type="GO" id="GO:0005886">
    <property type="term" value="C:plasma membrane"/>
    <property type="evidence" value="ECO:0000250"/>
    <property type="project" value="UniProtKB"/>
</dbReference>
<dbReference type="GO" id="GO:0047676">
    <property type="term" value="F:arachidonate-CoA ligase activity"/>
    <property type="evidence" value="ECO:0000314"/>
    <property type="project" value="UniProtKB"/>
</dbReference>
<dbReference type="GO" id="GO:0005524">
    <property type="term" value="F:ATP binding"/>
    <property type="evidence" value="ECO:0007669"/>
    <property type="project" value="UniProtKB-KW"/>
</dbReference>
<dbReference type="GO" id="GO:0004467">
    <property type="term" value="F:long-chain fatty acid-CoA ligase activity"/>
    <property type="evidence" value="ECO:0000314"/>
    <property type="project" value="UniProtKB"/>
</dbReference>
<dbReference type="GO" id="GO:0090434">
    <property type="term" value="F:oleoyl-CoA ligase activity"/>
    <property type="evidence" value="ECO:0000250"/>
    <property type="project" value="UniProtKB"/>
</dbReference>
<dbReference type="GO" id="GO:0032869">
    <property type="term" value="P:cellular response to insulin stimulus"/>
    <property type="evidence" value="ECO:0000270"/>
    <property type="project" value="RGD"/>
</dbReference>
<dbReference type="GO" id="GO:0006631">
    <property type="term" value="P:fatty acid metabolic process"/>
    <property type="evidence" value="ECO:0000304"/>
    <property type="project" value="RGD"/>
</dbReference>
<dbReference type="GO" id="GO:0001676">
    <property type="term" value="P:long-chain fatty acid metabolic process"/>
    <property type="evidence" value="ECO:0000314"/>
    <property type="project" value="UniProtKB"/>
</dbReference>
<dbReference type="GO" id="GO:0035338">
    <property type="term" value="P:long-chain fatty-acyl-CoA biosynthetic process"/>
    <property type="evidence" value="ECO:0000316"/>
    <property type="project" value="RGD"/>
</dbReference>
<dbReference type="GO" id="GO:0010747">
    <property type="term" value="P:positive regulation of long-chain fatty acid import across plasma membrane"/>
    <property type="evidence" value="ECO:0000314"/>
    <property type="project" value="RGD"/>
</dbReference>
<dbReference type="GO" id="GO:0010867">
    <property type="term" value="P:positive regulation of triglyceride biosynthetic process"/>
    <property type="evidence" value="ECO:0000314"/>
    <property type="project" value="RGD"/>
</dbReference>
<dbReference type="GO" id="GO:0070723">
    <property type="term" value="P:response to cholesterol"/>
    <property type="evidence" value="ECO:0000270"/>
    <property type="project" value="RGD"/>
</dbReference>
<dbReference type="GO" id="GO:0009749">
    <property type="term" value="P:response to glucose"/>
    <property type="evidence" value="ECO:0000270"/>
    <property type="project" value="RGD"/>
</dbReference>
<dbReference type="GO" id="GO:0007584">
    <property type="term" value="P:response to nutrient"/>
    <property type="evidence" value="ECO:0000270"/>
    <property type="project" value="RGD"/>
</dbReference>
<dbReference type="GO" id="GO:0009744">
    <property type="term" value="P:response to sucrose"/>
    <property type="evidence" value="ECO:0000270"/>
    <property type="project" value="RGD"/>
</dbReference>
<dbReference type="CDD" id="cd05927">
    <property type="entry name" value="LC-FACS_euk"/>
    <property type="match status" value="1"/>
</dbReference>
<dbReference type="FunFam" id="3.40.50.12780:FF:000006">
    <property type="entry name" value="long-chain-fatty-acid--CoA ligase 6 isoform X2"/>
    <property type="match status" value="1"/>
</dbReference>
<dbReference type="Gene3D" id="3.40.50.12780">
    <property type="entry name" value="N-terminal domain of ligase-like"/>
    <property type="match status" value="1"/>
</dbReference>
<dbReference type="InterPro" id="IPR020845">
    <property type="entry name" value="AMP-binding_CS"/>
</dbReference>
<dbReference type="InterPro" id="IPR000873">
    <property type="entry name" value="AMP-dep_synth/lig_dom"/>
</dbReference>
<dbReference type="InterPro" id="IPR042099">
    <property type="entry name" value="ANL_N_sf"/>
</dbReference>
<dbReference type="InterPro" id="IPR045311">
    <property type="entry name" value="LC-FACS_euk"/>
</dbReference>
<dbReference type="PANTHER" id="PTHR43272">
    <property type="entry name" value="LONG-CHAIN-FATTY-ACID--COA LIGASE"/>
    <property type="match status" value="1"/>
</dbReference>
<dbReference type="PANTHER" id="PTHR43272:SF107">
    <property type="entry name" value="LONG-CHAIN-FATTY-ACID--COA LIGASE 5"/>
    <property type="match status" value="1"/>
</dbReference>
<dbReference type="Pfam" id="PF00501">
    <property type="entry name" value="AMP-binding"/>
    <property type="match status" value="1"/>
</dbReference>
<dbReference type="SUPFAM" id="SSF56801">
    <property type="entry name" value="Acetyl-CoA synthetase-like"/>
    <property type="match status" value="1"/>
</dbReference>
<dbReference type="PROSITE" id="PS00455">
    <property type="entry name" value="AMP_BINDING"/>
    <property type="match status" value="1"/>
</dbReference>
<reference key="1">
    <citation type="journal article" date="1998" name="J. Biochem.">
        <title>A novel acyl-CoA synthetase, ACS5, expressed in intestinal epithelial cells and proliferating preadipocytes.</title>
        <authorList>
            <person name="Oikawa E."/>
            <person name="Iijima H."/>
            <person name="Suzuki T."/>
            <person name="Sasano H."/>
            <person name="Sato H."/>
            <person name="Kamataki A."/>
            <person name="Nagura H."/>
            <person name="Kang M.-J."/>
            <person name="Fujino T."/>
            <person name="Suzuki H."/>
            <person name="Yamamoto T.T."/>
        </authorList>
    </citation>
    <scope>NUCLEOTIDE SEQUENCE [MRNA]</scope>
    <scope>FUNCTION</scope>
    <scope>TISSUE SPECIFICITY</scope>
</reference>
<reference key="2">
    <citation type="journal article" date="2005" name="Biochemistry">
        <title>Characterization of recombinant long-chain rat acyl-CoA synthetase isoforms 3 and 6: identification of a novel variant of isoform 6.</title>
        <authorList>
            <person name="Van Horn C.G."/>
            <person name="Caviglia J.M."/>
            <person name="Li L.O."/>
            <person name="Wang S."/>
            <person name="Granger D.A."/>
            <person name="Coleman R.A."/>
        </authorList>
    </citation>
    <scope>BIOPHYSICOCHEMICAL PROPERTIES</scope>
    <source>
        <tissue>Brain</tissue>
    </source>
</reference>
<reference key="3">
    <citation type="journal article" date="2006" name="J. Biol. Chem.">
        <title>Rat long chain acyl-CoA synthetase 5 increases fatty acid uptake and partitioning to cellular triacylglycerol in McArdle-RH7777 cells.</title>
        <authorList>
            <person name="Mashek D.G."/>
            <person name="McKenzie M.A."/>
            <person name="Van Horn C.G."/>
            <person name="Coleman R.A."/>
        </authorList>
    </citation>
    <scope>FUNCTION</scope>
    <scope>SUBCELLULAR LOCATION</scope>
    <scope>INDUCTION</scope>
</reference>
<reference key="4">
    <citation type="journal article" date="2007" name="Arterioscler. Thromb. Vasc. Biol.">
        <title>Transcriptional activation of hepatic ACSL3 and ACSL5 by oncostatin m reduces hypertriglyceridemia through enhanced beta-oxidation.</title>
        <authorList>
            <person name="Zhou Y."/>
            <person name="Abidi P."/>
            <person name="Kim A."/>
            <person name="Chen W."/>
            <person name="Huang T.-T."/>
            <person name="Kraemer F.B."/>
            <person name="Liu J."/>
        </authorList>
    </citation>
    <scope>FUNCTION</scope>
</reference>
<reference key="5">
    <citation type="journal article" date="2017" name="J. Lipid Res.">
        <title>Long-chain acyl-CoA synthetase isoforms differ in preferences for eicosanoid species and long-chain fatty acids.</title>
        <authorList>
            <person name="Klett E.L."/>
            <person name="Chen S."/>
            <person name="Yechoor A."/>
            <person name="Lih F.B."/>
            <person name="Coleman R.A."/>
        </authorList>
    </citation>
    <scope>CATALYTIC ACTIVITY</scope>
    <scope>FUNCTION</scope>
    <scope>BIOPHYSICOCHEMICAL PROPERTIES</scope>
</reference>
<reference key="6">
    <citation type="journal article" date="2017" name="J. Lipid Res.">
        <authorList>
            <person name="Klett E.L."/>
            <person name="Chen S."/>
            <person name="Yechoor A."/>
            <person name="Lih F.B."/>
            <person name="Coleman R.A."/>
        </authorList>
    </citation>
    <scope>ERRATUM OF PUBMED:28209804</scope>
</reference>
<accession>O88813</accession>
<name>ACSL5_RAT</name>
<comment type="function">
    <text evidence="1 6 7 8 9">Catalyzes the conversion of long-chain fatty acids to their active form acyl-CoAs for both synthesis of cellular lipids, and degradation via beta-oxidation (PubMed:28209804). ACSL5 may sensitize epithelial cells to apoptosis specifically triggered by the death ligand TRAIL at the villus tip of the crypt-villus axis of the small intestine (By similarity). May have a role in the survival of glioma cells (By similarity). May activate fatty acids from exogenous sources for the synthesis of triacylglycerol destined for intracellular storage. It was suggested that it may also stimulate fatty acid oxidation. Utilizes a wide range of saturated fatty acids with a preference for C16-C18 unsaturated fatty acids.</text>
</comment>
<comment type="catalytic activity">
    <reaction evidence="8">
        <text>a long-chain fatty acid + ATP + CoA = a long-chain fatty acyl-CoA + AMP + diphosphate</text>
        <dbReference type="Rhea" id="RHEA:15421"/>
        <dbReference type="ChEBI" id="CHEBI:30616"/>
        <dbReference type="ChEBI" id="CHEBI:33019"/>
        <dbReference type="ChEBI" id="CHEBI:57287"/>
        <dbReference type="ChEBI" id="CHEBI:57560"/>
        <dbReference type="ChEBI" id="CHEBI:83139"/>
        <dbReference type="ChEBI" id="CHEBI:456215"/>
        <dbReference type="EC" id="6.2.1.3"/>
    </reaction>
    <physiologicalReaction direction="left-to-right" evidence="12">
        <dbReference type="Rhea" id="RHEA:15422"/>
    </physiologicalReaction>
</comment>
<comment type="catalytic activity">
    <reaction evidence="8">
        <text>(5Z,8Z,11Z,14Z)-eicosatetraenoate + ATP + CoA = (5Z,8Z,11Z,14Z)-eicosatetraenoyl-CoA + AMP + diphosphate</text>
        <dbReference type="Rhea" id="RHEA:19713"/>
        <dbReference type="ChEBI" id="CHEBI:30616"/>
        <dbReference type="ChEBI" id="CHEBI:32395"/>
        <dbReference type="ChEBI" id="CHEBI:33019"/>
        <dbReference type="ChEBI" id="CHEBI:57287"/>
        <dbReference type="ChEBI" id="CHEBI:57368"/>
        <dbReference type="ChEBI" id="CHEBI:456215"/>
        <dbReference type="EC" id="6.2.1.15"/>
    </reaction>
    <physiologicalReaction direction="left-to-right" evidence="12">
        <dbReference type="Rhea" id="RHEA:19714"/>
    </physiologicalReaction>
</comment>
<comment type="catalytic activity">
    <reaction evidence="8">
        <text>15-hydroxy-(5Z,8Z,11Z,13E)-eicosatetraenoate + ATP + CoA = 15-hydroxy-(5Z,8Z,11Z,13E)-eicosatetraenoyl-CoA + AMP + diphosphate</text>
        <dbReference type="Rhea" id="RHEA:52116"/>
        <dbReference type="ChEBI" id="CHEBI:30616"/>
        <dbReference type="ChEBI" id="CHEBI:33019"/>
        <dbReference type="ChEBI" id="CHEBI:57287"/>
        <dbReference type="ChEBI" id="CHEBI:78832"/>
        <dbReference type="ChEBI" id="CHEBI:136409"/>
        <dbReference type="ChEBI" id="CHEBI:456215"/>
    </reaction>
    <physiologicalReaction direction="left-to-right" evidence="12">
        <dbReference type="Rhea" id="RHEA:52117"/>
    </physiologicalReaction>
</comment>
<comment type="catalytic activity">
    <reaction evidence="8">
        <text>12-hydroxy-(5Z,8Z,10E,14Z)-eicosatetraenoate + ATP + CoA = 12-hydroxy-(5Z,8Z,10E,14Z)-eicosatetraenoyl-CoA + AMP + diphosphate</text>
        <dbReference type="Rhea" id="RHEA:52112"/>
        <dbReference type="ChEBI" id="CHEBI:30616"/>
        <dbReference type="ChEBI" id="CHEBI:33019"/>
        <dbReference type="ChEBI" id="CHEBI:57287"/>
        <dbReference type="ChEBI" id="CHEBI:90718"/>
        <dbReference type="ChEBI" id="CHEBI:136408"/>
        <dbReference type="ChEBI" id="CHEBI:456215"/>
    </reaction>
    <physiologicalReaction direction="left-to-right" evidence="12">
        <dbReference type="Rhea" id="RHEA:52113"/>
    </physiologicalReaction>
</comment>
<comment type="catalytic activity">
    <reaction evidence="8">
        <text>5-hydroxy-(6E,8Z,11Z,14Z)-eicosatetraenoate + ATP + CoA = 5-hydroxy-(6E,8Z,11Z,14Z)-eicosatetraenoyl-CoA + AMP + diphosphate</text>
        <dbReference type="Rhea" id="RHEA:52108"/>
        <dbReference type="ChEBI" id="CHEBI:30616"/>
        <dbReference type="ChEBI" id="CHEBI:33019"/>
        <dbReference type="ChEBI" id="CHEBI:57287"/>
        <dbReference type="ChEBI" id="CHEBI:65341"/>
        <dbReference type="ChEBI" id="CHEBI:136407"/>
        <dbReference type="ChEBI" id="CHEBI:456215"/>
    </reaction>
    <physiologicalReaction direction="left-to-right" evidence="12">
        <dbReference type="Rhea" id="RHEA:52109"/>
    </physiologicalReaction>
</comment>
<comment type="catalytic activity">
    <reaction evidence="8">
        <text>14,15-epoxy-(5Z,8Z,11Z)-eicosatrienoate + ATP + CoA = 14,15-epoxy-(5Z,8Z,11Z)-eicosatrienoyl-CoA + AMP + diphosphate</text>
        <dbReference type="Rhea" id="RHEA:52016"/>
        <dbReference type="ChEBI" id="CHEBI:30616"/>
        <dbReference type="ChEBI" id="CHEBI:33019"/>
        <dbReference type="ChEBI" id="CHEBI:57287"/>
        <dbReference type="ChEBI" id="CHEBI:84024"/>
        <dbReference type="ChEBI" id="CHEBI:136117"/>
        <dbReference type="ChEBI" id="CHEBI:456215"/>
    </reaction>
    <physiologicalReaction direction="left-to-right" evidence="12">
        <dbReference type="Rhea" id="RHEA:52017"/>
    </physiologicalReaction>
</comment>
<comment type="catalytic activity">
    <reaction evidence="8">
        <text>11,12-epoxy-(5Z,8Z,14Z)-eicosatrienoate + ATP + CoA = 11,12-epoxy-(5Z,8Z,14Z)-eicosatrienoyl-CoA + AMP + diphosphate</text>
        <dbReference type="Rhea" id="RHEA:52012"/>
        <dbReference type="ChEBI" id="CHEBI:30616"/>
        <dbReference type="ChEBI" id="CHEBI:33019"/>
        <dbReference type="ChEBI" id="CHEBI:57287"/>
        <dbReference type="ChEBI" id="CHEBI:76625"/>
        <dbReference type="ChEBI" id="CHEBI:136115"/>
        <dbReference type="ChEBI" id="CHEBI:456215"/>
    </reaction>
    <physiologicalReaction direction="left-to-right" evidence="12">
        <dbReference type="Rhea" id="RHEA:52013"/>
    </physiologicalReaction>
</comment>
<comment type="catalytic activity">
    <reaction evidence="3">
        <text>hexadecanoate + ATP + CoA = hexadecanoyl-CoA + AMP + diphosphate</text>
        <dbReference type="Rhea" id="RHEA:30751"/>
        <dbReference type="ChEBI" id="CHEBI:7896"/>
        <dbReference type="ChEBI" id="CHEBI:30616"/>
        <dbReference type="ChEBI" id="CHEBI:33019"/>
        <dbReference type="ChEBI" id="CHEBI:57287"/>
        <dbReference type="ChEBI" id="CHEBI:57379"/>
        <dbReference type="ChEBI" id="CHEBI:456215"/>
    </reaction>
    <physiologicalReaction direction="left-to-right" evidence="3">
        <dbReference type="Rhea" id="RHEA:30752"/>
    </physiologicalReaction>
</comment>
<comment type="catalytic activity">
    <reaction evidence="3">
        <text>(E)-hexadec-2-enoate + ATP + CoA = (2E)-hexadecenoyl-CoA + AMP + diphosphate</text>
        <dbReference type="Rhea" id="RHEA:36139"/>
        <dbReference type="ChEBI" id="CHEBI:30616"/>
        <dbReference type="ChEBI" id="CHEBI:33019"/>
        <dbReference type="ChEBI" id="CHEBI:57287"/>
        <dbReference type="ChEBI" id="CHEBI:61526"/>
        <dbReference type="ChEBI" id="CHEBI:72745"/>
        <dbReference type="ChEBI" id="CHEBI:456215"/>
    </reaction>
    <physiologicalReaction direction="left-to-right" evidence="3">
        <dbReference type="Rhea" id="RHEA:36140"/>
    </physiologicalReaction>
</comment>
<comment type="catalytic activity">
    <reaction evidence="8">
        <text>(9Z)-octadecenoate + ATP + CoA = (9Z)-octadecenoyl-CoA + AMP + diphosphate</text>
        <dbReference type="Rhea" id="RHEA:33607"/>
        <dbReference type="ChEBI" id="CHEBI:30616"/>
        <dbReference type="ChEBI" id="CHEBI:30823"/>
        <dbReference type="ChEBI" id="CHEBI:33019"/>
        <dbReference type="ChEBI" id="CHEBI:57287"/>
        <dbReference type="ChEBI" id="CHEBI:57387"/>
        <dbReference type="ChEBI" id="CHEBI:456215"/>
    </reaction>
    <physiologicalReaction direction="left-to-right" evidence="12">
        <dbReference type="Rhea" id="RHEA:33608"/>
    </physiologicalReaction>
</comment>
<comment type="biophysicochemical properties">
    <kinetics>
        <KM evidence="5">666 uM for ATP</KM>
        <KM evidence="5">2.4 uM for CoA</KM>
        <KM evidence="5">8.6 uM for palmitate</KM>
        <KM evidence="8">6.5 uM for palmitate (when expressed in bacteria)</KM>
        <KM evidence="8">4.4 uM for stearate (when expressed in bacteria)</KM>
        <KM evidence="8">6.3 uM for oleate (when expressed in bacteria)</KM>
        <KM evidence="8">5.8 uM for linoleate (when expressed in bacteria)</KM>
        <KM evidence="8">1.8 uM for arachidonate (when expressed in bacteria)</KM>
        <Vmax evidence="8">5053.0 nmol/min/mg enzyme with palmitate as substrate (when expressed in bacteria)</Vmax>
        <Vmax evidence="8">2164.0 nmol/min/mg enzyme with stearate as substrate (when expressed in bacteria)</Vmax>
        <Vmax evidence="8">3726.0 nmol/min/mg enzyme with oleate as substrate (when expressed in bacteria)</Vmax>
        <Vmax evidence="8">1351.0 nmol/min/mg enzyme with linoleate as substrate (when expressed in bacteria)</Vmax>
        <Vmax evidence="8">1880.0 nmol/min/mg enzyme with arachidonate as substrate (when expressed in bacteria)</Vmax>
        <Vmax evidence="5">130.0 nmol/min/mg enzyme with palmitate as substrate</Vmax>
    </kinetics>
</comment>
<comment type="subcellular location">
    <subcellularLocation>
        <location evidence="6">Mitochondrion</location>
    </subcellularLocation>
    <subcellularLocation>
        <location evidence="6">Endoplasmic reticulum</location>
    </subcellularLocation>
    <subcellularLocation>
        <location evidence="1">Mitochondrion outer membrane</location>
        <topology evidence="1">Single-pass type III membrane protein</topology>
    </subcellularLocation>
    <subcellularLocation>
        <location evidence="1">Endoplasmic reticulum membrane</location>
        <topology evidence="1">Single-pass type III membrane protein</topology>
    </subcellularLocation>
    <subcellularLocation>
        <location evidence="3">Cell membrane</location>
    </subcellularLocation>
</comment>
<comment type="tissue specificity">
    <text evidence="9">Expressed most abundantly in the small intestine, and to a much lesser extent in the lung, liver, adrenal gland, adipose tissue and kidney.</text>
</comment>
<comment type="induction">
    <text evidence="6">Expression decreases in response to fast and increases after high sucrose diet.</text>
</comment>
<comment type="miscellaneous">
    <text evidence="10">5 rat isozymes encoded by different genes have been described. ACSL6 corresponds to isozyme 2 (ACS2).</text>
</comment>
<comment type="similarity">
    <text evidence="11">Belongs to the ATP-dependent AMP-binding enzyme family.</text>
</comment>
<keyword id="KW-0007">Acetylation</keyword>
<keyword id="KW-0067">ATP-binding</keyword>
<keyword id="KW-1003">Cell membrane</keyword>
<keyword id="KW-0256">Endoplasmic reticulum</keyword>
<keyword id="KW-0276">Fatty acid metabolism</keyword>
<keyword id="KW-0436">Ligase</keyword>
<keyword id="KW-0443">Lipid metabolism</keyword>
<keyword id="KW-0460">Magnesium</keyword>
<keyword id="KW-0472">Membrane</keyword>
<keyword id="KW-0496">Mitochondrion</keyword>
<keyword id="KW-1000">Mitochondrion outer membrane</keyword>
<keyword id="KW-0547">Nucleotide-binding</keyword>
<keyword id="KW-1185">Reference proteome</keyword>
<keyword id="KW-0735">Signal-anchor</keyword>
<keyword id="KW-0812">Transmembrane</keyword>
<keyword id="KW-1133">Transmembrane helix</keyword>
<gene>
    <name evidence="13" type="primary">Acsl5</name>
    <name type="synonym">Acs5</name>
    <name type="synonym">Facl5</name>
</gene>
<feature type="chain" id="PRO_0000193114" description="Long-chain-fatty-acid--CoA ligase 5">
    <location>
        <begin position="1"/>
        <end position="683"/>
    </location>
</feature>
<feature type="transmembrane region" description="Helical; Signal-anchor for type III membrane protein" evidence="4">
    <location>
        <begin position="12"/>
        <end position="32"/>
    </location>
</feature>
<feature type="topological domain" description="Cytoplasmic" evidence="4">
    <location>
        <begin position="33"/>
        <end position="683"/>
    </location>
</feature>
<feature type="modified residue" description="N6-acetyllysine" evidence="2">
    <location>
        <position position="361"/>
    </location>
</feature>
<protein>
    <recommendedName>
        <fullName evidence="11">Long-chain-fatty-acid--CoA ligase 5</fullName>
        <ecNumber evidence="8">6.2.1.3</ecNumber>
    </recommendedName>
    <alternativeName>
        <fullName evidence="11">Arachidonate--CoA ligase</fullName>
        <ecNumber evidence="8">6.2.1.15</ecNumber>
    </alternativeName>
    <alternativeName>
        <fullName>Long-chain acyl-CoA synthetase 5</fullName>
        <shortName>LACS 5</shortName>
    </alternativeName>
</protein>
<proteinExistence type="evidence at protein level"/>
<organism>
    <name type="scientific">Rattus norvegicus</name>
    <name type="common">Rat</name>
    <dbReference type="NCBI Taxonomy" id="10116"/>
    <lineage>
        <taxon>Eukaryota</taxon>
        <taxon>Metazoa</taxon>
        <taxon>Chordata</taxon>
        <taxon>Craniata</taxon>
        <taxon>Vertebrata</taxon>
        <taxon>Euteleostomi</taxon>
        <taxon>Mammalia</taxon>
        <taxon>Eutheria</taxon>
        <taxon>Euarchontoglires</taxon>
        <taxon>Glires</taxon>
        <taxon>Rodentia</taxon>
        <taxon>Myomorpha</taxon>
        <taxon>Muroidea</taxon>
        <taxon>Muridae</taxon>
        <taxon>Murinae</taxon>
        <taxon>Rattus</taxon>
    </lineage>
</organism>